<dbReference type="EC" id="3.6.1.-" evidence="1"/>
<dbReference type="EMBL" id="CP000453">
    <property type="protein sequence ID" value="ABI55781.1"/>
    <property type="molecule type" value="Genomic_DNA"/>
</dbReference>
<dbReference type="RefSeq" id="WP_011628177.1">
    <property type="nucleotide sequence ID" value="NC_008340.1"/>
</dbReference>
<dbReference type="SMR" id="Q0ABK6"/>
<dbReference type="KEGG" id="aeh:Mlg_0427"/>
<dbReference type="eggNOG" id="COG0494">
    <property type="taxonomic scope" value="Bacteria"/>
</dbReference>
<dbReference type="HOGENOM" id="CLU_087195_3_1_6"/>
<dbReference type="OrthoDB" id="9816040at2"/>
<dbReference type="Proteomes" id="UP000001962">
    <property type="component" value="Chromosome"/>
</dbReference>
<dbReference type="GO" id="GO:0005737">
    <property type="term" value="C:cytoplasm"/>
    <property type="evidence" value="ECO:0007669"/>
    <property type="project" value="TreeGrafter"/>
</dbReference>
<dbReference type="GO" id="GO:0034353">
    <property type="term" value="F:mRNA 5'-diphosphatase activity"/>
    <property type="evidence" value="ECO:0007669"/>
    <property type="project" value="TreeGrafter"/>
</dbReference>
<dbReference type="GO" id="GO:0006402">
    <property type="term" value="P:mRNA catabolic process"/>
    <property type="evidence" value="ECO:0007669"/>
    <property type="project" value="TreeGrafter"/>
</dbReference>
<dbReference type="CDD" id="cd03671">
    <property type="entry name" value="NUDIX_Ap4A_hydrolase_plant_like"/>
    <property type="match status" value="1"/>
</dbReference>
<dbReference type="FunFam" id="3.90.79.10:FF:000001">
    <property type="entry name" value="RNA pyrophosphohydrolase"/>
    <property type="match status" value="1"/>
</dbReference>
<dbReference type="Gene3D" id="3.90.79.10">
    <property type="entry name" value="Nucleoside Triphosphate Pyrophosphohydrolase"/>
    <property type="match status" value="1"/>
</dbReference>
<dbReference type="HAMAP" id="MF_00298">
    <property type="entry name" value="Nudix_RppH"/>
    <property type="match status" value="1"/>
</dbReference>
<dbReference type="InterPro" id="IPR020476">
    <property type="entry name" value="Nudix_hydrolase"/>
</dbReference>
<dbReference type="InterPro" id="IPR015797">
    <property type="entry name" value="NUDIX_hydrolase-like_dom_sf"/>
</dbReference>
<dbReference type="InterPro" id="IPR020084">
    <property type="entry name" value="NUDIX_hydrolase_CS"/>
</dbReference>
<dbReference type="InterPro" id="IPR000086">
    <property type="entry name" value="NUDIX_hydrolase_dom"/>
</dbReference>
<dbReference type="InterPro" id="IPR022927">
    <property type="entry name" value="RppH"/>
</dbReference>
<dbReference type="NCBIfam" id="NF001934">
    <property type="entry name" value="PRK00714.1-1"/>
    <property type="match status" value="1"/>
</dbReference>
<dbReference type="NCBIfam" id="NF001937">
    <property type="entry name" value="PRK00714.1-4"/>
    <property type="match status" value="1"/>
</dbReference>
<dbReference type="NCBIfam" id="NF001938">
    <property type="entry name" value="PRK00714.1-5"/>
    <property type="match status" value="1"/>
</dbReference>
<dbReference type="PANTHER" id="PTHR23114">
    <property type="entry name" value="M7GPPPN-MRNA HYDROLASE"/>
    <property type="match status" value="1"/>
</dbReference>
<dbReference type="PANTHER" id="PTHR23114:SF17">
    <property type="entry name" value="M7GPPPN-MRNA HYDROLASE"/>
    <property type="match status" value="1"/>
</dbReference>
<dbReference type="Pfam" id="PF00293">
    <property type="entry name" value="NUDIX"/>
    <property type="match status" value="1"/>
</dbReference>
<dbReference type="PRINTS" id="PR00502">
    <property type="entry name" value="NUDIXFAMILY"/>
</dbReference>
<dbReference type="SUPFAM" id="SSF55811">
    <property type="entry name" value="Nudix"/>
    <property type="match status" value="1"/>
</dbReference>
<dbReference type="PROSITE" id="PS51462">
    <property type="entry name" value="NUDIX"/>
    <property type="match status" value="1"/>
</dbReference>
<dbReference type="PROSITE" id="PS00893">
    <property type="entry name" value="NUDIX_BOX"/>
    <property type="match status" value="1"/>
</dbReference>
<keyword id="KW-0378">Hydrolase</keyword>
<keyword id="KW-1185">Reference proteome</keyword>
<evidence type="ECO:0000255" key="1">
    <source>
        <dbReference type="HAMAP-Rule" id="MF_00298"/>
    </source>
</evidence>
<evidence type="ECO:0000256" key="2">
    <source>
        <dbReference type="SAM" id="MobiDB-lite"/>
    </source>
</evidence>
<accession>Q0ABK6</accession>
<feature type="chain" id="PRO_1000021926" description="RNA pyrophosphohydrolase">
    <location>
        <begin position="1"/>
        <end position="181"/>
    </location>
</feature>
<feature type="domain" description="Nudix hydrolase" evidence="1">
    <location>
        <begin position="6"/>
        <end position="149"/>
    </location>
</feature>
<feature type="region of interest" description="Disordered" evidence="2">
    <location>
        <begin position="159"/>
        <end position="181"/>
    </location>
</feature>
<feature type="short sequence motif" description="Nudix box">
    <location>
        <begin position="38"/>
        <end position="59"/>
    </location>
</feature>
<feature type="compositionally biased region" description="Basic residues" evidence="2">
    <location>
        <begin position="168"/>
        <end position="181"/>
    </location>
</feature>
<reference key="1">
    <citation type="submission" date="2006-08" db="EMBL/GenBank/DDBJ databases">
        <title>Complete sequence of Alkalilimnicola ehrilichei MLHE-1.</title>
        <authorList>
            <person name="Copeland A."/>
            <person name="Lucas S."/>
            <person name="Lapidus A."/>
            <person name="Barry K."/>
            <person name="Detter J.C."/>
            <person name="Glavina del Rio T."/>
            <person name="Hammon N."/>
            <person name="Israni S."/>
            <person name="Dalin E."/>
            <person name="Tice H."/>
            <person name="Pitluck S."/>
            <person name="Sims D."/>
            <person name="Brettin T."/>
            <person name="Bruce D."/>
            <person name="Han C."/>
            <person name="Tapia R."/>
            <person name="Gilna P."/>
            <person name="Schmutz J."/>
            <person name="Larimer F."/>
            <person name="Land M."/>
            <person name="Hauser L."/>
            <person name="Kyrpides N."/>
            <person name="Mikhailova N."/>
            <person name="Oremland R.S."/>
            <person name="Hoeft S.E."/>
            <person name="Switzer-Blum J."/>
            <person name="Kulp T."/>
            <person name="King G."/>
            <person name="Tabita R."/>
            <person name="Witte B."/>
            <person name="Santini J.M."/>
            <person name="Basu P."/>
            <person name="Hollibaugh J.T."/>
            <person name="Xie G."/>
            <person name="Stolz J.F."/>
            <person name="Richardson P."/>
        </authorList>
    </citation>
    <scope>NUCLEOTIDE SEQUENCE [LARGE SCALE GENOMIC DNA]</scope>
    <source>
        <strain>ATCC BAA-1101 / DSM 17681 / MLHE-1</strain>
    </source>
</reference>
<organism>
    <name type="scientific">Alkalilimnicola ehrlichii (strain ATCC BAA-1101 / DSM 17681 / MLHE-1)</name>
    <dbReference type="NCBI Taxonomy" id="187272"/>
    <lineage>
        <taxon>Bacteria</taxon>
        <taxon>Pseudomonadati</taxon>
        <taxon>Pseudomonadota</taxon>
        <taxon>Gammaproteobacteria</taxon>
        <taxon>Chromatiales</taxon>
        <taxon>Ectothiorhodospiraceae</taxon>
        <taxon>Alkalilimnicola</taxon>
    </lineage>
</organism>
<protein>
    <recommendedName>
        <fullName evidence="1">RNA pyrophosphohydrolase</fullName>
        <ecNumber evidence="1">3.6.1.-</ecNumber>
    </recommendedName>
    <alternativeName>
        <fullName evidence="1">(Di)nucleoside polyphosphate hydrolase</fullName>
    </alternativeName>
</protein>
<proteinExistence type="inferred from homology"/>
<gene>
    <name evidence="1" type="primary">rppH</name>
    <name evidence="1" type="synonym">nudH</name>
    <name type="ordered locus">Mlg_0427</name>
</gene>
<name>RPPH_ALKEH</name>
<comment type="function">
    <text evidence="1">Accelerates the degradation of transcripts by removing pyrophosphate from the 5'-end of triphosphorylated RNA, leading to a more labile monophosphorylated state that can stimulate subsequent ribonuclease cleavage.</text>
</comment>
<comment type="cofactor">
    <cofactor evidence="1">
        <name>a divalent metal cation</name>
        <dbReference type="ChEBI" id="CHEBI:60240"/>
    </cofactor>
</comment>
<comment type="similarity">
    <text evidence="1">Belongs to the Nudix hydrolase family. RppH subfamily.</text>
</comment>
<sequence>MVDSDGFRPNVGIILANAAGQVFWARRIGQNAWQFPQGGIKAQETPEEALFRELEEEVGLAPADVEVMGCTRGWLRYRLPRRLIRSRSRPVCIGQKQVWFLLRLVGEEEQVQLDRSERPEFDHWRWVDFWHPVQEVVFFKRRVYTRALQELGPLLFPDGLPRQPPVGRPRRSAPPRGCRRA</sequence>